<keyword id="KW-0963">Cytoplasm</keyword>
<keyword id="KW-0448">Lipopolysaccharide biosynthesis</keyword>
<keyword id="KW-0808">Transferase</keyword>
<gene>
    <name evidence="1" type="primary">kdsA</name>
    <name type="ordered locus">PFLU_1290</name>
</gene>
<feature type="chain" id="PRO_1000202336" description="2-dehydro-3-deoxyphosphooctonate aldolase">
    <location>
        <begin position="1"/>
        <end position="281"/>
    </location>
</feature>
<name>KDSA_PSEFS</name>
<sequence>MAQKIIRVGDIEIANDKPMVLFGGMNVLESRDMAMQVCEEYVKVTEKLGIPYVFKASFDKANRSSVTSYRGPGLEEGMRIFQDIKQAFGVPIITDVHEPEQAAVVAEVCDIIQLPAFLSRQTDLVVAMAKTGAVINIKKAQFLAPQEMKHILNKCVEAGNDQLILCERGSSFGYNNLVVDMLGFGIMKQFEYPVFFDVTHALQMPGGRADSAGGRRAQVLDLAKAGISQSLAGLFLEAHPDPDNAKCDGPCALRLDKLEPFLAQLKQLDELVKSFPTVETA</sequence>
<organism>
    <name type="scientific">Pseudomonas fluorescens (strain SBW25)</name>
    <dbReference type="NCBI Taxonomy" id="216595"/>
    <lineage>
        <taxon>Bacteria</taxon>
        <taxon>Pseudomonadati</taxon>
        <taxon>Pseudomonadota</taxon>
        <taxon>Gammaproteobacteria</taxon>
        <taxon>Pseudomonadales</taxon>
        <taxon>Pseudomonadaceae</taxon>
        <taxon>Pseudomonas</taxon>
    </lineage>
</organism>
<proteinExistence type="inferred from homology"/>
<dbReference type="EC" id="2.5.1.55" evidence="1"/>
<dbReference type="EMBL" id="AM181176">
    <property type="protein sequence ID" value="CAY47546.1"/>
    <property type="molecule type" value="Genomic_DNA"/>
</dbReference>
<dbReference type="RefSeq" id="WP_010212442.1">
    <property type="nucleotide sequence ID" value="NC_012660.1"/>
</dbReference>
<dbReference type="SMR" id="C3K6H5"/>
<dbReference type="STRING" id="294.SRM1_01148"/>
<dbReference type="GeneID" id="93462905"/>
<dbReference type="eggNOG" id="COG2877">
    <property type="taxonomic scope" value="Bacteria"/>
</dbReference>
<dbReference type="HOGENOM" id="CLU_036666_0_0_6"/>
<dbReference type="OrthoDB" id="9776934at2"/>
<dbReference type="UniPathway" id="UPA00030"/>
<dbReference type="UniPathway" id="UPA00357">
    <property type="reaction ID" value="UER00474"/>
</dbReference>
<dbReference type="GO" id="GO:0005737">
    <property type="term" value="C:cytoplasm"/>
    <property type="evidence" value="ECO:0007669"/>
    <property type="project" value="UniProtKB-SubCell"/>
</dbReference>
<dbReference type="GO" id="GO:0008676">
    <property type="term" value="F:3-deoxy-8-phosphooctulonate synthase activity"/>
    <property type="evidence" value="ECO:0007669"/>
    <property type="project" value="UniProtKB-UniRule"/>
</dbReference>
<dbReference type="GO" id="GO:0019294">
    <property type="term" value="P:keto-3-deoxy-D-manno-octulosonic acid biosynthetic process"/>
    <property type="evidence" value="ECO:0007669"/>
    <property type="project" value="UniProtKB-UniRule"/>
</dbReference>
<dbReference type="FunFam" id="3.20.20.70:FF:000058">
    <property type="entry name" value="2-dehydro-3-deoxyphosphooctonate aldolase"/>
    <property type="match status" value="1"/>
</dbReference>
<dbReference type="Gene3D" id="3.20.20.70">
    <property type="entry name" value="Aldolase class I"/>
    <property type="match status" value="1"/>
</dbReference>
<dbReference type="HAMAP" id="MF_00056">
    <property type="entry name" value="KDO8P_synth"/>
    <property type="match status" value="1"/>
</dbReference>
<dbReference type="InterPro" id="IPR013785">
    <property type="entry name" value="Aldolase_TIM"/>
</dbReference>
<dbReference type="InterPro" id="IPR006218">
    <property type="entry name" value="DAHP1/KDSA"/>
</dbReference>
<dbReference type="InterPro" id="IPR006269">
    <property type="entry name" value="KDO8P_synthase"/>
</dbReference>
<dbReference type="NCBIfam" id="TIGR01362">
    <property type="entry name" value="KDO8P_synth"/>
    <property type="match status" value="1"/>
</dbReference>
<dbReference type="NCBIfam" id="NF003543">
    <property type="entry name" value="PRK05198.1"/>
    <property type="match status" value="1"/>
</dbReference>
<dbReference type="NCBIfam" id="NF009109">
    <property type="entry name" value="PRK12457.1"/>
    <property type="match status" value="1"/>
</dbReference>
<dbReference type="PANTHER" id="PTHR21057">
    <property type="entry name" value="PHOSPHO-2-DEHYDRO-3-DEOXYHEPTONATE ALDOLASE"/>
    <property type="match status" value="1"/>
</dbReference>
<dbReference type="Pfam" id="PF00793">
    <property type="entry name" value="DAHP_synth_1"/>
    <property type="match status" value="1"/>
</dbReference>
<dbReference type="SUPFAM" id="SSF51569">
    <property type="entry name" value="Aldolase"/>
    <property type="match status" value="1"/>
</dbReference>
<protein>
    <recommendedName>
        <fullName evidence="1">2-dehydro-3-deoxyphosphooctonate aldolase</fullName>
        <ecNumber evidence="1">2.5.1.55</ecNumber>
    </recommendedName>
    <alternativeName>
        <fullName evidence="1">3-deoxy-D-manno-octulosonic acid 8-phosphate synthase</fullName>
    </alternativeName>
    <alternativeName>
        <fullName evidence="1">KDO-8-phosphate synthase</fullName>
        <shortName evidence="1">KDO 8-P synthase</shortName>
        <shortName evidence="1">KDOPS</shortName>
    </alternativeName>
    <alternativeName>
        <fullName evidence="1">Phospho-2-dehydro-3-deoxyoctonate aldolase</fullName>
    </alternativeName>
</protein>
<evidence type="ECO:0000255" key="1">
    <source>
        <dbReference type="HAMAP-Rule" id="MF_00056"/>
    </source>
</evidence>
<comment type="catalytic activity">
    <reaction evidence="1">
        <text>D-arabinose 5-phosphate + phosphoenolpyruvate + H2O = 3-deoxy-alpha-D-manno-2-octulosonate-8-phosphate + phosphate</text>
        <dbReference type="Rhea" id="RHEA:14053"/>
        <dbReference type="ChEBI" id="CHEBI:15377"/>
        <dbReference type="ChEBI" id="CHEBI:43474"/>
        <dbReference type="ChEBI" id="CHEBI:57693"/>
        <dbReference type="ChEBI" id="CHEBI:58702"/>
        <dbReference type="ChEBI" id="CHEBI:85985"/>
        <dbReference type="EC" id="2.5.1.55"/>
    </reaction>
</comment>
<comment type="pathway">
    <text evidence="1">Carbohydrate biosynthesis; 3-deoxy-D-manno-octulosonate biosynthesis; 3-deoxy-D-manno-octulosonate from D-ribulose 5-phosphate: step 2/3.</text>
</comment>
<comment type="pathway">
    <text evidence="1">Bacterial outer membrane biogenesis; lipopolysaccharide biosynthesis.</text>
</comment>
<comment type="subcellular location">
    <subcellularLocation>
        <location evidence="1">Cytoplasm</location>
    </subcellularLocation>
</comment>
<comment type="similarity">
    <text evidence="1">Belongs to the KdsA family.</text>
</comment>
<accession>C3K6H5</accession>
<reference key="1">
    <citation type="journal article" date="2009" name="Genome Biol.">
        <title>Genomic and genetic analyses of diversity and plant interactions of Pseudomonas fluorescens.</title>
        <authorList>
            <person name="Silby M.W."/>
            <person name="Cerdeno-Tarraga A.M."/>
            <person name="Vernikos G.S."/>
            <person name="Giddens S.R."/>
            <person name="Jackson R.W."/>
            <person name="Preston G.M."/>
            <person name="Zhang X.-X."/>
            <person name="Moon C.D."/>
            <person name="Gehrig S.M."/>
            <person name="Godfrey S.A.C."/>
            <person name="Knight C.G."/>
            <person name="Malone J.G."/>
            <person name="Robinson Z."/>
            <person name="Spiers A.J."/>
            <person name="Harris S."/>
            <person name="Challis G.L."/>
            <person name="Yaxley A.M."/>
            <person name="Harris D."/>
            <person name="Seeger K."/>
            <person name="Murphy L."/>
            <person name="Rutter S."/>
            <person name="Squares R."/>
            <person name="Quail M.A."/>
            <person name="Saunders E."/>
            <person name="Mavromatis K."/>
            <person name="Brettin T.S."/>
            <person name="Bentley S.D."/>
            <person name="Hothersall J."/>
            <person name="Stephens E."/>
            <person name="Thomas C.M."/>
            <person name="Parkhill J."/>
            <person name="Levy S.B."/>
            <person name="Rainey P.B."/>
            <person name="Thomson N.R."/>
        </authorList>
    </citation>
    <scope>NUCLEOTIDE SEQUENCE [LARGE SCALE GENOMIC DNA]</scope>
    <source>
        <strain>SBW25</strain>
    </source>
</reference>